<name>HDA_ECO5E</name>
<evidence type="ECO:0000250" key="1"/>
<evidence type="ECO:0000255" key="2">
    <source>
        <dbReference type="HAMAP-Rule" id="MF_01158"/>
    </source>
</evidence>
<evidence type="ECO:0000305" key="3"/>
<comment type="function">
    <text evidence="1">Mediates the interaction of DNA replication initiator protein DnaA with DNA polymerase subunit beta sliding clamp (dnaN). Stimulates hydrolysis of ATP-DnaA to ADP-DnaA, rendering DnaA inactive for reinitiation, a process called regulatory inhibition of DnaA or RIDA (By similarity).</text>
</comment>
<comment type="subunit">
    <text evidence="2">The active form seems to be an ADP-bound monomer. Forms the RIDA complex (regulatory inactivation of DnaA) of ATP-DnaA, ADP-Hda and the DNA-loaded beta sliding clamp (dnaN).</text>
</comment>
<comment type="similarity">
    <text evidence="2">Belongs to the DnaA family. HdA subfamily.</text>
</comment>
<comment type="sequence caution" evidence="3">
    <conflict type="erroneous initiation">
        <sequence resource="EMBL-CDS" id="ACI39616"/>
    </conflict>
</comment>
<protein>
    <recommendedName>
        <fullName evidence="2">DnaA regulatory inactivator Hda</fullName>
    </recommendedName>
</protein>
<organism>
    <name type="scientific">Escherichia coli O157:H7 (strain EC4115 / EHEC)</name>
    <dbReference type="NCBI Taxonomy" id="444450"/>
    <lineage>
        <taxon>Bacteria</taxon>
        <taxon>Pseudomonadati</taxon>
        <taxon>Pseudomonadota</taxon>
        <taxon>Gammaproteobacteria</taxon>
        <taxon>Enterobacterales</taxon>
        <taxon>Enterobacteriaceae</taxon>
        <taxon>Escherichia</taxon>
    </lineage>
</organism>
<proteinExistence type="inferred from homology"/>
<reference key="1">
    <citation type="journal article" date="2011" name="Proc. Natl. Acad. Sci. U.S.A.">
        <title>Genomic anatomy of Escherichia coli O157:H7 outbreaks.</title>
        <authorList>
            <person name="Eppinger M."/>
            <person name="Mammel M.K."/>
            <person name="Leclerc J.E."/>
            <person name="Ravel J."/>
            <person name="Cebula T.A."/>
        </authorList>
    </citation>
    <scope>NUCLEOTIDE SEQUENCE [LARGE SCALE GENOMIC DNA]</scope>
    <source>
        <strain>EC4115 / EHEC</strain>
    </source>
</reference>
<accession>B5Z033</accession>
<gene>
    <name evidence="2" type="primary">hda</name>
    <name type="ordered locus">ECH74115_3718</name>
</gene>
<feature type="chain" id="PRO_1000137808" description="DnaA regulatory inactivator Hda">
    <location>
        <begin position="1"/>
        <end position="233"/>
    </location>
</feature>
<keyword id="KW-0235">DNA replication</keyword>
<keyword id="KW-0236">DNA replication inhibitor</keyword>
<dbReference type="EMBL" id="CP001164">
    <property type="protein sequence ID" value="ACI39616.1"/>
    <property type="status" value="ALT_INIT"/>
    <property type="molecule type" value="Genomic_DNA"/>
</dbReference>
<dbReference type="RefSeq" id="WP_001307333.1">
    <property type="nucleotide sequence ID" value="NC_011353.1"/>
</dbReference>
<dbReference type="SMR" id="B5Z033"/>
<dbReference type="KEGG" id="ecf:ECH74115_3718"/>
<dbReference type="HOGENOM" id="CLU_072265_1_1_6"/>
<dbReference type="GO" id="GO:0006270">
    <property type="term" value="P:DNA replication initiation"/>
    <property type="evidence" value="ECO:0007669"/>
    <property type="project" value="TreeGrafter"/>
</dbReference>
<dbReference type="GO" id="GO:0032297">
    <property type="term" value="P:negative regulation of DNA-templated DNA replication initiation"/>
    <property type="evidence" value="ECO:0007669"/>
    <property type="project" value="InterPro"/>
</dbReference>
<dbReference type="FunFam" id="1.10.8.60:FF:000024">
    <property type="entry name" value="DnaA regulatory inactivator Hda"/>
    <property type="match status" value="1"/>
</dbReference>
<dbReference type="FunFam" id="3.40.50.300:FF:000452">
    <property type="entry name" value="DnaA regulatory inactivator Hda"/>
    <property type="match status" value="1"/>
</dbReference>
<dbReference type="Gene3D" id="1.10.8.60">
    <property type="match status" value="1"/>
</dbReference>
<dbReference type="Gene3D" id="3.40.50.300">
    <property type="entry name" value="P-loop containing nucleotide triphosphate hydrolases"/>
    <property type="match status" value="1"/>
</dbReference>
<dbReference type="HAMAP" id="MF_01158">
    <property type="entry name" value="Hda"/>
    <property type="match status" value="1"/>
</dbReference>
<dbReference type="InterPro" id="IPR020591">
    <property type="entry name" value="Chromosome_initiator_DnaA-like"/>
</dbReference>
<dbReference type="InterPro" id="IPR013317">
    <property type="entry name" value="DnaA_dom"/>
</dbReference>
<dbReference type="InterPro" id="IPR017788">
    <property type="entry name" value="Hda"/>
</dbReference>
<dbReference type="InterPro" id="IPR022864">
    <property type="entry name" value="Hda_Enterobact"/>
</dbReference>
<dbReference type="InterPro" id="IPR055199">
    <property type="entry name" value="Hda_lid"/>
</dbReference>
<dbReference type="InterPro" id="IPR027417">
    <property type="entry name" value="P-loop_NTPase"/>
</dbReference>
<dbReference type="NCBIfam" id="TIGR03420">
    <property type="entry name" value="DnaA_homol_Hda"/>
    <property type="match status" value="1"/>
</dbReference>
<dbReference type="NCBIfam" id="NF005982">
    <property type="entry name" value="PRK08084.1"/>
    <property type="match status" value="1"/>
</dbReference>
<dbReference type="PANTHER" id="PTHR30050">
    <property type="entry name" value="CHROMOSOMAL REPLICATION INITIATOR PROTEIN DNAA"/>
    <property type="match status" value="1"/>
</dbReference>
<dbReference type="PANTHER" id="PTHR30050:SF5">
    <property type="entry name" value="DNAA REGULATORY INACTIVATOR HDA"/>
    <property type="match status" value="1"/>
</dbReference>
<dbReference type="Pfam" id="PF00308">
    <property type="entry name" value="Bac_DnaA"/>
    <property type="match status" value="1"/>
</dbReference>
<dbReference type="Pfam" id="PF22688">
    <property type="entry name" value="Hda_lid"/>
    <property type="match status" value="1"/>
</dbReference>
<dbReference type="PRINTS" id="PR00051">
    <property type="entry name" value="DNAA"/>
</dbReference>
<dbReference type="SUPFAM" id="SSF52540">
    <property type="entry name" value="P-loop containing nucleoside triphosphate hydrolases"/>
    <property type="match status" value="1"/>
</dbReference>
<sequence>MNTPAQLSLPLYLPDDETFASFWPGDNSSLLAALQNVLRQEHSGYIYLWAREGAGRSHLLHAACAELSQRGDAVGYVPLDKRTWFVPEVLDGMEHLSLVCIDNIECIAGDELWEMAIFDLYNRILESGKTRLLITGDRPPRQLNLGLPDLASRLDWGQIYKLQPLSDEDKLQALQLRARLRGFELPEDVGRFLLKRLDREMRTLFMTLDQLDRASITAQRKLTIPFVKEILKL</sequence>